<gene>
    <name evidence="1" type="primary">carS</name>
    <name type="ordered locus">PF0398</name>
</gene>
<comment type="function">
    <text evidence="1">Catalyzes the formation of CDP-2,3-bis-(O-geranylgeranyl)-sn-glycerol (CDP-archaeol) from 2,3-bis-(O-geranylgeranyl)-sn-glycerol 1-phosphate (DGGGP) and CTP. This reaction is the third ether-bond-formation step in the biosynthesis of archaeal membrane lipids.</text>
</comment>
<comment type="catalytic activity">
    <reaction evidence="1">
        <text>2,3-bis-O-(geranylgeranyl)-sn-glycerol 1-phosphate + CTP + H(+) = CDP-2,3-bis-O-(geranylgeranyl)-sn-glycerol + diphosphate</text>
        <dbReference type="Rhea" id="RHEA:25690"/>
        <dbReference type="ChEBI" id="CHEBI:15378"/>
        <dbReference type="ChEBI" id="CHEBI:33019"/>
        <dbReference type="ChEBI" id="CHEBI:37563"/>
        <dbReference type="ChEBI" id="CHEBI:58837"/>
        <dbReference type="ChEBI" id="CHEBI:58838"/>
        <dbReference type="EC" id="2.7.7.67"/>
    </reaction>
</comment>
<comment type="cofactor">
    <cofactor evidence="1">
        <name>Mg(2+)</name>
        <dbReference type="ChEBI" id="CHEBI:18420"/>
    </cofactor>
</comment>
<comment type="pathway">
    <text evidence="1">Membrane lipid metabolism; glycerophospholipid metabolism.</text>
</comment>
<comment type="subcellular location">
    <subcellularLocation>
        <location evidence="1">Cell membrane</location>
        <topology evidence="1">Multi-pass membrane protein</topology>
    </subcellularLocation>
</comment>
<comment type="similarity">
    <text evidence="1">Belongs to the CDP-archaeol synthase family.</text>
</comment>
<evidence type="ECO:0000255" key="1">
    <source>
        <dbReference type="HAMAP-Rule" id="MF_01117"/>
    </source>
</evidence>
<organism>
    <name type="scientific">Pyrococcus furiosus (strain ATCC 43587 / DSM 3638 / JCM 8422 / Vc1)</name>
    <dbReference type="NCBI Taxonomy" id="186497"/>
    <lineage>
        <taxon>Archaea</taxon>
        <taxon>Methanobacteriati</taxon>
        <taxon>Methanobacteriota</taxon>
        <taxon>Thermococci</taxon>
        <taxon>Thermococcales</taxon>
        <taxon>Thermococcaceae</taxon>
        <taxon>Pyrococcus</taxon>
    </lineage>
</organism>
<dbReference type="EC" id="2.7.7.67" evidence="1"/>
<dbReference type="EMBL" id="AE009950">
    <property type="protein sequence ID" value="AAL80522.1"/>
    <property type="molecule type" value="Genomic_DNA"/>
</dbReference>
<dbReference type="RefSeq" id="WP_011011511.1">
    <property type="nucleotide sequence ID" value="NZ_CP023154.1"/>
</dbReference>
<dbReference type="SMR" id="Q8U3Q8"/>
<dbReference type="STRING" id="186497.PF0398"/>
<dbReference type="PaxDb" id="186497-PF0398"/>
<dbReference type="KEGG" id="pfu:PF0398"/>
<dbReference type="PATRIC" id="fig|186497.12.peg.413"/>
<dbReference type="eggNOG" id="arCOG04106">
    <property type="taxonomic scope" value="Archaea"/>
</dbReference>
<dbReference type="HOGENOM" id="CLU_105710_0_0_2"/>
<dbReference type="OrthoDB" id="45383at2157"/>
<dbReference type="PhylomeDB" id="Q8U3Q8"/>
<dbReference type="UniPathway" id="UPA00940"/>
<dbReference type="Proteomes" id="UP000001013">
    <property type="component" value="Chromosome"/>
</dbReference>
<dbReference type="GO" id="GO:0005886">
    <property type="term" value="C:plasma membrane"/>
    <property type="evidence" value="ECO:0007669"/>
    <property type="project" value="UniProtKB-SubCell"/>
</dbReference>
<dbReference type="GO" id="GO:0043338">
    <property type="term" value="F:CDP-2,3-bis-(O-geranylgeranyl)-sn-glycerol synthase activity"/>
    <property type="evidence" value="ECO:0007669"/>
    <property type="project" value="UniProtKB-EC"/>
</dbReference>
<dbReference type="GO" id="GO:0046474">
    <property type="term" value="P:glycerophospholipid biosynthetic process"/>
    <property type="evidence" value="ECO:0007669"/>
    <property type="project" value="UniProtKB-UniRule"/>
</dbReference>
<dbReference type="HAMAP" id="MF_01117">
    <property type="entry name" value="CDP_archaeol_synth"/>
    <property type="match status" value="1"/>
</dbReference>
<dbReference type="InterPro" id="IPR032690">
    <property type="entry name" value="CarS"/>
</dbReference>
<dbReference type="InterPro" id="IPR002726">
    <property type="entry name" value="CarS_archaea"/>
</dbReference>
<dbReference type="NCBIfam" id="NF003114">
    <property type="entry name" value="PRK04032.1"/>
    <property type="match status" value="1"/>
</dbReference>
<dbReference type="PANTHER" id="PTHR39650">
    <property type="entry name" value="CDP-ARCHAEOL SYNTHASE"/>
    <property type="match status" value="1"/>
</dbReference>
<dbReference type="PANTHER" id="PTHR39650:SF1">
    <property type="entry name" value="CDP-ARCHAEOL SYNTHASE"/>
    <property type="match status" value="1"/>
</dbReference>
<dbReference type="Pfam" id="PF01864">
    <property type="entry name" value="CarS-like"/>
    <property type="match status" value="1"/>
</dbReference>
<keyword id="KW-1003">Cell membrane</keyword>
<keyword id="KW-0444">Lipid biosynthesis</keyword>
<keyword id="KW-0443">Lipid metabolism</keyword>
<keyword id="KW-0460">Magnesium</keyword>
<keyword id="KW-0472">Membrane</keyword>
<keyword id="KW-0594">Phospholipid biosynthesis</keyword>
<keyword id="KW-1208">Phospholipid metabolism</keyword>
<keyword id="KW-1185">Reference proteome</keyword>
<keyword id="KW-0808">Transferase</keyword>
<keyword id="KW-0812">Transmembrane</keyword>
<keyword id="KW-1133">Transmembrane helix</keyword>
<proteinExistence type="inferred from homology"/>
<feature type="chain" id="PRO_0000094176" description="CDP-archaeol synthase">
    <location>
        <begin position="1"/>
        <end position="167"/>
    </location>
</feature>
<feature type="transmembrane region" description="Helical" evidence="1">
    <location>
        <begin position="4"/>
        <end position="24"/>
    </location>
</feature>
<feature type="transmembrane region" description="Helical" evidence="1">
    <location>
        <begin position="51"/>
        <end position="71"/>
    </location>
</feature>
<feature type="transmembrane region" description="Helical" evidence="1">
    <location>
        <begin position="80"/>
        <end position="100"/>
    </location>
</feature>
<feature type="transmembrane region" description="Helical" evidence="1">
    <location>
        <begin position="104"/>
        <end position="124"/>
    </location>
</feature>
<feature type="transmembrane region" description="Helical" evidence="1">
    <location>
        <begin position="139"/>
        <end position="158"/>
    </location>
</feature>
<sequence length="167" mass="18511">MHPILEAFWYILPAYFANSSPVILGGGTPIDFGKTWRDGRRIFGDSKTWRGFLGGLTVGTLIGVIQQIIYPYYPSLSLAFKVSFLLALGALVGDLIGSFIKRRLNLPPGYPAVGLDQWGFLISALCFAYPVHTIPTGEVLLLLVVTPLIHWGTNVLAYKMKWKSVPW</sequence>
<name>CDPAS_PYRFU</name>
<protein>
    <recommendedName>
        <fullName evidence="1">CDP-archaeol synthase</fullName>
        <ecNumber evidence="1">2.7.7.67</ecNumber>
    </recommendedName>
    <alternativeName>
        <fullName evidence="1">CDP-2,3-bis-(O-geranylgeranyl)-sn-glycerol synthase</fullName>
    </alternativeName>
</protein>
<reference key="1">
    <citation type="journal article" date="1999" name="Genetics">
        <title>Divergence of the hyperthermophilic archaea Pyrococcus furiosus and P. horikoshii inferred from complete genomic sequences.</title>
        <authorList>
            <person name="Maeder D.L."/>
            <person name="Weiss R.B."/>
            <person name="Dunn D.M."/>
            <person name="Cherry J.L."/>
            <person name="Gonzalez J.M."/>
            <person name="DiRuggiero J."/>
            <person name="Robb F.T."/>
        </authorList>
    </citation>
    <scope>NUCLEOTIDE SEQUENCE [LARGE SCALE GENOMIC DNA]</scope>
    <source>
        <strain>ATCC 43587 / DSM 3638 / JCM 8422 / Vc1</strain>
    </source>
</reference>
<accession>Q8U3Q8</accession>